<gene>
    <name evidence="1" type="primary">atpF</name>
    <name type="ordered locus">SAHV_2091</name>
</gene>
<organism>
    <name type="scientific">Staphylococcus aureus (strain Mu3 / ATCC 700698)</name>
    <dbReference type="NCBI Taxonomy" id="418127"/>
    <lineage>
        <taxon>Bacteria</taxon>
        <taxon>Bacillati</taxon>
        <taxon>Bacillota</taxon>
        <taxon>Bacilli</taxon>
        <taxon>Bacillales</taxon>
        <taxon>Staphylococcaceae</taxon>
        <taxon>Staphylococcus</taxon>
    </lineage>
</organism>
<protein>
    <recommendedName>
        <fullName evidence="1">ATP synthase subunit b</fullName>
    </recommendedName>
    <alternativeName>
        <fullName evidence="1">ATP synthase F(0) sector subunit b</fullName>
    </alternativeName>
    <alternativeName>
        <fullName evidence="1">ATPase subunit I</fullName>
    </alternativeName>
    <alternativeName>
        <fullName evidence="1">F-type ATPase subunit b</fullName>
        <shortName evidence="1">F-ATPase subunit b</shortName>
    </alternativeName>
</protein>
<comment type="function">
    <text evidence="1">F(1)F(0) ATP synthase produces ATP from ADP in the presence of a proton or sodium gradient. F-type ATPases consist of two structural domains, F(1) containing the extramembraneous catalytic core and F(0) containing the membrane proton channel, linked together by a central stalk and a peripheral stalk. During catalysis, ATP synthesis in the catalytic domain of F(1) is coupled via a rotary mechanism of the central stalk subunits to proton translocation.</text>
</comment>
<comment type="function">
    <text evidence="1">Component of the F(0) channel, it forms part of the peripheral stalk, linking F(1) to F(0).</text>
</comment>
<comment type="subunit">
    <text evidence="1">F-type ATPases have 2 components, F(1) - the catalytic core - and F(0) - the membrane proton channel. F(1) has five subunits: alpha(3), beta(3), gamma(1), delta(1), epsilon(1). F(0) has three main subunits: a(1), b(2) and c(10-14). The alpha and beta chains form an alternating ring which encloses part of the gamma chain. F(1) is attached to F(0) by a central stalk formed by the gamma and epsilon chains, while a peripheral stalk is formed by the delta and b chains.</text>
</comment>
<comment type="subcellular location">
    <subcellularLocation>
        <location evidence="1">Cell membrane</location>
        <topology evidence="1">Single-pass membrane protein</topology>
    </subcellularLocation>
</comment>
<comment type="similarity">
    <text evidence="1">Belongs to the ATPase B chain family.</text>
</comment>
<evidence type="ECO:0000255" key="1">
    <source>
        <dbReference type="HAMAP-Rule" id="MF_01398"/>
    </source>
</evidence>
<keyword id="KW-0066">ATP synthesis</keyword>
<keyword id="KW-1003">Cell membrane</keyword>
<keyword id="KW-0138">CF(0)</keyword>
<keyword id="KW-0375">Hydrogen ion transport</keyword>
<keyword id="KW-0406">Ion transport</keyword>
<keyword id="KW-0472">Membrane</keyword>
<keyword id="KW-0812">Transmembrane</keyword>
<keyword id="KW-1133">Transmembrane helix</keyword>
<keyword id="KW-0813">Transport</keyword>
<reference key="1">
    <citation type="journal article" date="2008" name="Antimicrob. Agents Chemother.">
        <title>Mutated response regulator graR is responsible for phenotypic conversion of Staphylococcus aureus from heterogeneous vancomycin-intermediate resistance to vancomycin-intermediate resistance.</title>
        <authorList>
            <person name="Neoh H.-M."/>
            <person name="Cui L."/>
            <person name="Yuzawa H."/>
            <person name="Takeuchi F."/>
            <person name="Matsuo M."/>
            <person name="Hiramatsu K."/>
        </authorList>
    </citation>
    <scope>NUCLEOTIDE SEQUENCE [LARGE SCALE GENOMIC DNA]</scope>
    <source>
        <strain>Mu3 / ATCC 700698</strain>
    </source>
</reference>
<feature type="chain" id="PRO_0000368785" description="ATP synthase subunit b">
    <location>
        <begin position="1"/>
        <end position="173"/>
    </location>
</feature>
<feature type="transmembrane region" description="Helical" evidence="1">
    <location>
        <begin position="15"/>
        <end position="35"/>
    </location>
</feature>
<proteinExistence type="inferred from homology"/>
<sequence length="173" mass="19539">MTETANLFVLGAAGGVEWGTVIVQVLTFIVLLALLKKFAWGPLKDVMDKRERDINRDIDDAEQAKLNAQKLEEENKQKLKETQEEVQKILEDAKVQARQQQEQIIHEANVRANGMIETAQSEINSQKERAIADINNQVSELSVLIASKVLRKEISEQDQKALVDKYLKEAGDK</sequence>
<name>ATPF_STAA1</name>
<accession>A7X4U9</accession>
<dbReference type="EMBL" id="AP009324">
    <property type="protein sequence ID" value="BAF78974.1"/>
    <property type="molecule type" value="Genomic_DNA"/>
</dbReference>
<dbReference type="RefSeq" id="WP_000140679.1">
    <property type="nucleotide sequence ID" value="NZ_CTYB01000015.1"/>
</dbReference>
<dbReference type="SMR" id="A7X4U9"/>
<dbReference type="KEGG" id="saw:SAHV_2091"/>
<dbReference type="HOGENOM" id="CLU_079215_4_2_9"/>
<dbReference type="GO" id="GO:0005886">
    <property type="term" value="C:plasma membrane"/>
    <property type="evidence" value="ECO:0007669"/>
    <property type="project" value="UniProtKB-SubCell"/>
</dbReference>
<dbReference type="GO" id="GO:0045259">
    <property type="term" value="C:proton-transporting ATP synthase complex"/>
    <property type="evidence" value="ECO:0007669"/>
    <property type="project" value="UniProtKB-KW"/>
</dbReference>
<dbReference type="GO" id="GO:0046933">
    <property type="term" value="F:proton-transporting ATP synthase activity, rotational mechanism"/>
    <property type="evidence" value="ECO:0007669"/>
    <property type="project" value="UniProtKB-UniRule"/>
</dbReference>
<dbReference type="GO" id="GO:0046961">
    <property type="term" value="F:proton-transporting ATPase activity, rotational mechanism"/>
    <property type="evidence" value="ECO:0007669"/>
    <property type="project" value="TreeGrafter"/>
</dbReference>
<dbReference type="CDD" id="cd06503">
    <property type="entry name" value="ATP-synt_Fo_b"/>
    <property type="match status" value="1"/>
</dbReference>
<dbReference type="HAMAP" id="MF_01398">
    <property type="entry name" value="ATP_synth_b_bprime"/>
    <property type="match status" value="1"/>
</dbReference>
<dbReference type="InterPro" id="IPR028987">
    <property type="entry name" value="ATP_synth_B-like_membr_sf"/>
</dbReference>
<dbReference type="InterPro" id="IPR002146">
    <property type="entry name" value="ATP_synth_b/b'su_bac/chlpt"/>
</dbReference>
<dbReference type="InterPro" id="IPR005864">
    <property type="entry name" value="ATP_synth_F0_bsu_bac"/>
</dbReference>
<dbReference type="InterPro" id="IPR050059">
    <property type="entry name" value="ATP_synthase_B_chain"/>
</dbReference>
<dbReference type="NCBIfam" id="TIGR01144">
    <property type="entry name" value="ATP_synt_b"/>
    <property type="match status" value="1"/>
</dbReference>
<dbReference type="NCBIfam" id="NF009987">
    <property type="entry name" value="PRK13453.1"/>
    <property type="match status" value="1"/>
</dbReference>
<dbReference type="PANTHER" id="PTHR33445:SF1">
    <property type="entry name" value="ATP SYNTHASE SUBUNIT B"/>
    <property type="match status" value="1"/>
</dbReference>
<dbReference type="PANTHER" id="PTHR33445">
    <property type="entry name" value="ATP SYNTHASE SUBUNIT B', CHLOROPLASTIC"/>
    <property type="match status" value="1"/>
</dbReference>
<dbReference type="Pfam" id="PF00430">
    <property type="entry name" value="ATP-synt_B"/>
    <property type="match status" value="1"/>
</dbReference>
<dbReference type="SUPFAM" id="SSF81573">
    <property type="entry name" value="F1F0 ATP synthase subunit B, membrane domain"/>
    <property type="match status" value="1"/>
</dbReference>